<feature type="chain" id="PRO_0000433054" description="HTH-type transcriptional regulator PrpR">
    <location>
        <begin position="1"/>
        <end position="486"/>
    </location>
</feature>
<feature type="domain" description="HTH cro/C1-type" evidence="1">
    <location>
        <begin position="22"/>
        <end position="76"/>
    </location>
</feature>
<feature type="DNA-binding region" description="H-T-H motif" evidence="1">
    <location>
        <begin position="33"/>
        <end position="52"/>
    </location>
</feature>
<feature type="helix" evidence="11">
    <location>
        <begin position="155"/>
        <end position="164"/>
    </location>
</feature>
<feature type="turn" evidence="11">
    <location>
        <begin position="165"/>
        <end position="167"/>
    </location>
</feature>
<feature type="helix" evidence="11">
    <location>
        <begin position="170"/>
        <end position="182"/>
    </location>
</feature>
<feature type="helix" evidence="11">
    <location>
        <begin position="190"/>
        <end position="202"/>
    </location>
</feature>
<feature type="strand" evidence="11">
    <location>
        <begin position="205"/>
        <end position="210"/>
    </location>
</feature>
<feature type="helix" evidence="11">
    <location>
        <begin position="213"/>
        <end position="215"/>
    </location>
</feature>
<feature type="strand" evidence="11">
    <location>
        <begin position="217"/>
        <end position="221"/>
    </location>
</feature>
<feature type="turn" evidence="11">
    <location>
        <begin position="222"/>
        <end position="225"/>
    </location>
</feature>
<feature type="strand" evidence="11">
    <location>
        <begin position="226"/>
        <end position="230"/>
    </location>
</feature>
<feature type="helix" evidence="11">
    <location>
        <begin position="235"/>
        <end position="250"/>
    </location>
</feature>
<feature type="helix" evidence="11">
    <location>
        <begin position="252"/>
        <end position="260"/>
    </location>
</feature>
<feature type="helix" evidence="11">
    <location>
        <begin position="267"/>
        <end position="286"/>
    </location>
</feature>
<feature type="helix" evidence="11">
    <location>
        <begin position="289"/>
        <end position="298"/>
    </location>
</feature>
<feature type="turn" evidence="11">
    <location>
        <begin position="299"/>
        <end position="301"/>
    </location>
</feature>
<feature type="helix" evidence="11">
    <location>
        <begin position="303"/>
        <end position="310"/>
    </location>
</feature>
<feature type="helix" evidence="11">
    <location>
        <begin position="314"/>
        <end position="321"/>
    </location>
</feature>
<feature type="strand" evidence="11">
    <location>
        <begin position="334"/>
        <end position="340"/>
    </location>
</feature>
<feature type="strand" evidence="11">
    <location>
        <begin position="345"/>
        <end position="351"/>
    </location>
</feature>
<feature type="strand" evidence="10">
    <location>
        <begin position="357"/>
        <end position="359"/>
    </location>
</feature>
<feature type="helix" evidence="11">
    <location>
        <begin position="366"/>
        <end position="369"/>
    </location>
</feature>
<feature type="helix" evidence="11">
    <location>
        <begin position="370"/>
        <end position="373"/>
    </location>
</feature>
<feature type="strand" evidence="11">
    <location>
        <begin position="379"/>
        <end position="384"/>
    </location>
</feature>
<feature type="strand" evidence="11">
    <location>
        <begin position="390"/>
        <end position="398"/>
    </location>
</feature>
<feature type="strand" evidence="11">
    <location>
        <begin position="400"/>
        <end position="406"/>
    </location>
</feature>
<feature type="strand" evidence="11">
    <location>
        <begin position="412"/>
        <end position="419"/>
    </location>
</feature>
<feature type="helix" evidence="11">
    <location>
        <begin position="420"/>
        <end position="425"/>
    </location>
</feature>
<feature type="helix" evidence="11">
    <location>
        <begin position="427"/>
        <end position="429"/>
    </location>
</feature>
<feature type="strand" evidence="10">
    <location>
        <begin position="439"/>
        <end position="442"/>
    </location>
</feature>
<feature type="helix" evidence="10">
    <location>
        <begin position="447"/>
        <end position="449"/>
    </location>
</feature>
<feature type="strand" evidence="10">
    <location>
        <begin position="463"/>
        <end position="465"/>
    </location>
</feature>
<feature type="strand" evidence="10">
    <location>
        <begin position="473"/>
        <end position="477"/>
    </location>
</feature>
<gene>
    <name evidence="6" type="primary">prpR</name>
    <name type="ordered locus">Rv1129c</name>
    <name type="ordered locus">RVBD_1129c</name>
    <name type="ORF">P425_01178</name>
</gene>
<keyword id="KW-0002">3D-structure</keyword>
<keyword id="KW-0010">Activator</keyword>
<keyword id="KW-0238">DNA-binding</keyword>
<keyword id="KW-1185">Reference proteome</keyword>
<keyword id="KW-0678">Repressor</keyword>
<keyword id="KW-0804">Transcription</keyword>
<keyword id="KW-0805">Transcription regulation</keyword>
<comment type="function">
    <text evidence="2 3 4">Plays a key role in regulating expression of enzymes involved in the catabolism of short chain fatty acids (SCFA) via both the glyoxylate (acetyl degradation route) and the methylcitrate cycle (propionate degradation route) (PubMed:22916289, PubMed:24705740). Required for intracellular growth in macrophages and for the assimilation of cholesterol-derived propionate (PubMed:22365605). PrpR acts as a transcriptional activator of prpDC and icl genes when propionate is the main carbon source, and as a ramB repressor (PubMed:22916289). During growth on propionate, PrpR also acts as a transcriptional repressor of dnaA, which encodes the DnaA initiator protein responsible for initiating chromosomal replication (PubMed:24705740). It is possibly involved in the regulation of genes responsible for controlling cholesterol utilization (PubMed:22365605).</text>
</comment>
<comment type="pathway">
    <text evidence="8">Organic acid metabolism; propanoate degradation.</text>
</comment>
<comment type="pathway">
    <text evidence="8 9">Steroid metabolism; cholesterol metabolism.</text>
</comment>
<comment type="induction">
    <text evidence="3">By propionate.</text>
</comment>
<comment type="disruption phenotype">
    <text evidence="2 3">Cells lacking this gene are unable to grow using either propionate or cholesterol as a primary carbon source and the transcript levels of both prpD and prpC are dramatically reduced regardless of carbon source. When the mutant grows on medium containing glucose or acetate as a sole carbon source, there is no significant difference in growth compared to the wild-type.</text>
</comment>
<comment type="similarity">
    <text evidence="7">Belongs to the short-chain fatty acyl-CoA assimilation regulator (ScfR) family.</text>
</comment>
<protein>
    <recommendedName>
        <fullName evidence="5">HTH-type transcriptional regulator PrpR</fullName>
    </recommendedName>
    <alternativeName>
        <fullName evidence="6">Propionate regulator</fullName>
        <shortName evidence="6">PRPR</shortName>
    </alternativeName>
</protein>
<organism>
    <name type="scientific">Mycobacterium tuberculosis (strain ATCC 25618 / H37Rv)</name>
    <dbReference type="NCBI Taxonomy" id="83332"/>
    <lineage>
        <taxon>Bacteria</taxon>
        <taxon>Bacillati</taxon>
        <taxon>Actinomycetota</taxon>
        <taxon>Actinomycetes</taxon>
        <taxon>Mycobacteriales</taxon>
        <taxon>Mycobacteriaceae</taxon>
        <taxon>Mycobacterium</taxon>
        <taxon>Mycobacterium tuberculosis complex</taxon>
    </lineage>
</organism>
<accession>O06581</accession>
<accession>F2GGE3</accession>
<accession>I6XX54</accession>
<accession>Q7D8T0</accession>
<reference key="1">
    <citation type="journal article" date="1998" name="Nature">
        <title>Deciphering the biology of Mycobacterium tuberculosis from the complete genome sequence.</title>
        <authorList>
            <person name="Cole S.T."/>
            <person name="Brosch R."/>
            <person name="Parkhill J."/>
            <person name="Garnier T."/>
            <person name="Churcher C.M."/>
            <person name="Harris D.E."/>
            <person name="Gordon S.V."/>
            <person name="Eiglmeier K."/>
            <person name="Gas S."/>
            <person name="Barry C.E. III"/>
            <person name="Tekaia F."/>
            <person name="Badcock K."/>
            <person name="Basham D."/>
            <person name="Brown D."/>
            <person name="Chillingworth T."/>
            <person name="Connor R."/>
            <person name="Davies R.M."/>
            <person name="Devlin K."/>
            <person name="Feltwell T."/>
            <person name="Gentles S."/>
            <person name="Hamlin N."/>
            <person name="Holroyd S."/>
            <person name="Hornsby T."/>
            <person name="Jagels K."/>
            <person name="Krogh A."/>
            <person name="McLean J."/>
            <person name="Moule S."/>
            <person name="Murphy L.D."/>
            <person name="Oliver S."/>
            <person name="Osborne J."/>
            <person name="Quail M.A."/>
            <person name="Rajandream M.A."/>
            <person name="Rogers J."/>
            <person name="Rutter S."/>
            <person name="Seeger K."/>
            <person name="Skelton S."/>
            <person name="Squares S."/>
            <person name="Squares R."/>
            <person name="Sulston J.E."/>
            <person name="Taylor K."/>
            <person name="Whitehead S."/>
            <person name="Barrell B.G."/>
        </authorList>
    </citation>
    <scope>NUCLEOTIDE SEQUENCE [LARGE SCALE GENOMIC DNA]</scope>
    <source>
        <strain>ATCC 25618 / H37Rv</strain>
        <strain>H37Rv</strain>
    </source>
</reference>
<reference key="2">
    <citation type="submission" date="2013-11" db="EMBL/GenBank/DDBJ databases">
        <title>The genome sequence of Mycobacterium tuberculosis H37Rv.</title>
        <authorList>
            <consortium name="The Broad Institute Genome Sequencing Platform"/>
            <person name="Galagan J."/>
            <person name="Kreiswirth B."/>
            <person name="Dobos K."/>
            <person name="Fortune S."/>
            <person name="Fitzgerald M."/>
            <person name="Young S.K."/>
            <person name="Zeng Q."/>
            <person name="Gargeya S."/>
            <person name="Abouelleil A."/>
            <person name="Alvarado L."/>
            <person name="Berlin A.M."/>
            <person name="Chapman S.B."/>
            <person name="Gainer-Dewar J."/>
            <person name="Goldberg J."/>
            <person name="Gnerre S."/>
            <person name="Griggs A."/>
            <person name="Gujja S."/>
            <person name="Hansen M."/>
            <person name="Howarth C."/>
            <person name="Imamovic A."/>
            <person name="Larimer J."/>
            <person name="McCowan C."/>
            <person name="Murphy C."/>
            <person name="Pearson M."/>
            <person name="Poon T."/>
            <person name="Priest M."/>
            <person name="Roberts A."/>
            <person name="Saif S."/>
            <person name="Shea T."/>
            <person name="Sykes S."/>
            <person name="Wortman J."/>
            <person name="Nusbaum C."/>
            <person name="Birren B."/>
        </authorList>
    </citation>
    <scope>NUCLEOTIDE SEQUENCE [LARGE SCALE GENOMIC DNA]</scope>
    <source>
        <strain>ATCC 25618 / H37Rv</strain>
    </source>
</reference>
<reference key="3">
    <citation type="submission" date="2014-04" db="EMBL/GenBank/DDBJ databases">
        <title>The genome sequence of Mycobacterium tuberculosis H37Rv.</title>
        <authorList>
            <consortium name="The Broad Institute Genomics Platform"/>
            <consortium name="The Broad Institute Genome Sequencing Center for Infectious Disease"/>
            <person name="Earl A.M."/>
            <person name="Kreiswirth B."/>
            <person name="Gomez J."/>
            <person name="Victor T."/>
            <person name="Desjardins C."/>
            <person name="Abeel T."/>
            <person name="Young S."/>
            <person name="Zeng Q."/>
            <person name="Gargeya S."/>
            <person name="Abouelleil A."/>
            <person name="Alvarado L."/>
            <person name="Chapman S.B."/>
            <person name="Gainer-Dewar J."/>
            <person name="Goldberg J."/>
            <person name="Griggs A."/>
            <person name="Gujja S."/>
            <person name="Hansen M."/>
            <person name="Howarth C."/>
            <person name="Imamovic A."/>
            <person name="Larimer J."/>
            <person name="Murphy C."/>
            <person name="Naylor J."/>
            <person name="Pearson M."/>
            <person name="Poon T.W."/>
            <person name="Priest M."/>
            <person name="Roberts A."/>
            <person name="Saif S."/>
            <person name="Shea T."/>
            <person name="Sykes S."/>
            <person name="Wortman J."/>
            <person name="Nusbaum C."/>
            <person name="Birren B."/>
        </authorList>
    </citation>
    <scope>NUCLEOTIDE SEQUENCE [LARGE SCALE GENOMIC DNA]</scope>
    <source>
        <strain>H37Rv</strain>
    </source>
</reference>
<reference key="4">
    <citation type="journal article" date="2011" name="Mol. Cell. Proteomics">
        <title>Proteogenomic analysis of Mycobacterium tuberculosis by high resolution mass spectrometry.</title>
        <authorList>
            <person name="Kelkar D.S."/>
            <person name="Kumar D."/>
            <person name="Kumar P."/>
            <person name="Balakrishnan L."/>
            <person name="Muthusamy B."/>
            <person name="Yadav A.K."/>
            <person name="Shrivastava P."/>
            <person name="Marimuthu A."/>
            <person name="Anand S."/>
            <person name="Sundaram H."/>
            <person name="Kingsbury R."/>
            <person name="Harsha H.C."/>
            <person name="Nair B."/>
            <person name="Prasad T.S."/>
            <person name="Chauhan D.S."/>
            <person name="Katoch K."/>
            <person name="Katoch V.M."/>
            <person name="Kumar P."/>
            <person name="Chaerkady R."/>
            <person name="Ramachandran S."/>
            <person name="Dash D."/>
            <person name="Pandey A."/>
        </authorList>
    </citation>
    <scope>IDENTIFICATION BY MASS SPECTROMETRY [LARGE SCALE ANALYSIS]</scope>
    <source>
        <strain>ATCC 25618 / H37Rv</strain>
    </source>
</reference>
<reference key="5">
    <citation type="journal article" date="2012" name="Chem. Biol.">
        <title>Cholesterol catabolism by Mycobacterium tuberculosis requires transcriptional and metabolic adaptations.</title>
        <authorList>
            <person name="Griffin J.E."/>
            <person name="Pandey A.K."/>
            <person name="Gilmore S.A."/>
            <person name="Mizrahi V."/>
            <person name="McKinney J.D."/>
            <person name="Bertozzi C.R."/>
            <person name="Sassetti C.M."/>
        </authorList>
    </citation>
    <scope>FUNCTION</scope>
    <scope>DISRUPTION PHENOTYPE</scope>
    <source>
        <strain>H37Rv</strain>
    </source>
</reference>
<reference key="6">
    <citation type="journal article" date="2012" name="PLoS ONE">
        <title>A novel role of the PrpR as a transcription factor involved in the regulation of methylcitrate pathway in Mycobacterium tuberculosis.</title>
        <authorList>
            <person name="Masiewicz P."/>
            <person name="Brzostek A."/>
            <person name="Wolanski M."/>
            <person name="Dziadek J."/>
            <person name="Zakrzewska-Czerwinska J."/>
        </authorList>
    </citation>
    <scope>FUNCTION</scope>
    <scope>DISRUPTION PHENOTYPE</scope>
    <scope>INDUCTION</scope>
    <source>
        <strain>H37Rv</strain>
    </source>
</reference>
<reference key="7">
    <citation type="journal article" date="2014" name="Antonie Van Leeuwenhoek">
        <title>Propionate represses the dnaA gene via the methylcitrate pathway-regulating transcription factor, PrpR, in Mycobacterium tuberculosis.</title>
        <authorList>
            <person name="Masiewicz P."/>
            <person name="Wolanski M."/>
            <person name="Brzostek A."/>
            <person name="Dziadek J."/>
            <person name="Zakrzewska-Czerwinska J."/>
        </authorList>
    </citation>
    <scope>FUNCTION</scope>
    <source>
        <strain>H37Rv</strain>
    </source>
</reference>
<evidence type="ECO:0000255" key="1">
    <source>
        <dbReference type="PROSITE-ProRule" id="PRU00257"/>
    </source>
</evidence>
<evidence type="ECO:0000269" key="2">
    <source>
    </source>
</evidence>
<evidence type="ECO:0000269" key="3">
    <source>
    </source>
</evidence>
<evidence type="ECO:0000269" key="4">
    <source>
    </source>
</evidence>
<evidence type="ECO:0000303" key="5">
    <source>
    </source>
</evidence>
<evidence type="ECO:0000303" key="6">
    <source>
    </source>
</evidence>
<evidence type="ECO:0000305" key="7"/>
<evidence type="ECO:0000305" key="8">
    <source>
    </source>
</evidence>
<evidence type="ECO:0000305" key="9">
    <source>
    </source>
</evidence>
<evidence type="ECO:0007829" key="10">
    <source>
        <dbReference type="PDB" id="6CYY"/>
    </source>
</evidence>
<evidence type="ECO:0007829" key="11">
    <source>
        <dbReference type="PDB" id="6D2S"/>
    </source>
</evidence>
<proteinExistence type="evidence at protein level"/>
<name>PRPR_MYCTU</name>
<sequence length="486" mass="54087">MTRSNVLPVARTYSRTFSGARLRRLRQERGLTQVALAKALDLSTSYVNQLENDQRPITVPVLLLLTERFDLSAQYFSSDSDARLVADLSDVFTDIGVEHAVSGAQIEEFVARMPEVGHSLVAVHRRLRAATEELEGYRSRATAETELPPARPMPFEEVRDFFYDRNNYIHDLDMAAERMFTESGMRTGGLDIQLAELMRDRFGISVVIDDNLPDTAKRRYHPDTKVLRVAHWLMPGQRAFQIATQLALVGQSDLISSIVATDDQLSTEARGVARIGLANYFAGAFLLPYREFHRAAEQLRYDIDLLGRRFGVGFETVCHRLSTLQRPRQRGIPFIFVRTDKAGNISKRQSATAFHFSRVGGSCPLWVVHDAFAQPERIVRQVAQMPDGRSYFWVAKTTAADGLGYLGPHKNFAVGLGCDLAHAHKLVYSTGVVLDDPSTEVPIGAGCKICNRTSCAQRAFPYLGGRVAVDENAGSSLPYSSTEQSV</sequence>
<dbReference type="EMBL" id="AL123456">
    <property type="protein sequence ID" value="CCP43883.1"/>
    <property type="molecule type" value="Genomic_DNA"/>
</dbReference>
<dbReference type="EMBL" id="CP003248">
    <property type="protein sequence ID" value="AFN49028.1"/>
    <property type="molecule type" value="Genomic_DNA"/>
</dbReference>
<dbReference type="EMBL" id="JLDD01000012">
    <property type="protein sequence ID" value="KBJ36375.1"/>
    <property type="molecule type" value="Genomic_DNA"/>
</dbReference>
<dbReference type="RefSeq" id="NP_215645.1">
    <property type="nucleotide sequence ID" value="NC_000962.3"/>
</dbReference>
<dbReference type="RefSeq" id="WP_003405904.1">
    <property type="nucleotide sequence ID" value="NZ_NVQJ01000021.1"/>
</dbReference>
<dbReference type="PDB" id="6CYJ">
    <property type="method" value="X-ray"/>
    <property type="resolution" value="2.70 A"/>
    <property type="chains" value="A/B=81-486"/>
</dbReference>
<dbReference type="PDB" id="6CYY">
    <property type="method" value="X-ray"/>
    <property type="resolution" value="2.51 A"/>
    <property type="chains" value="A/B=81-486"/>
</dbReference>
<dbReference type="PDB" id="6CZ6">
    <property type="method" value="X-ray"/>
    <property type="resolution" value="2.70 A"/>
    <property type="chains" value="A/B/C/D=81-486"/>
</dbReference>
<dbReference type="PDB" id="6D2S">
    <property type="method" value="X-ray"/>
    <property type="resolution" value="1.82 A"/>
    <property type="chains" value="A=155-440"/>
</dbReference>
<dbReference type="PDBsum" id="6CYJ"/>
<dbReference type="PDBsum" id="6CYY"/>
<dbReference type="PDBsum" id="6CZ6"/>
<dbReference type="PDBsum" id="6D2S"/>
<dbReference type="SMR" id="O06581"/>
<dbReference type="STRING" id="83332.Rv1129c"/>
<dbReference type="PaxDb" id="83332-Rv1129c"/>
<dbReference type="DNASU" id="885963"/>
<dbReference type="GeneID" id="885963"/>
<dbReference type="KEGG" id="mtu:Rv1129c"/>
<dbReference type="KEGG" id="mtv:RVBD_1129c"/>
<dbReference type="PATRIC" id="fig|83332.111.peg.1261"/>
<dbReference type="TubercuList" id="Rv1129c"/>
<dbReference type="eggNOG" id="COG1396">
    <property type="taxonomic scope" value="Bacteria"/>
</dbReference>
<dbReference type="eggNOG" id="COG3800">
    <property type="taxonomic scope" value="Bacteria"/>
</dbReference>
<dbReference type="InParanoid" id="O06581"/>
<dbReference type="OrthoDB" id="9810578at2"/>
<dbReference type="PhylomeDB" id="O06581"/>
<dbReference type="UniPathway" id="UPA00296"/>
<dbReference type="UniPathway" id="UPA00946"/>
<dbReference type="Proteomes" id="UP000001584">
    <property type="component" value="Chromosome"/>
</dbReference>
<dbReference type="GO" id="GO:0003677">
    <property type="term" value="F:DNA binding"/>
    <property type="evidence" value="ECO:0007669"/>
    <property type="project" value="UniProtKB-KW"/>
</dbReference>
<dbReference type="GO" id="GO:0003700">
    <property type="term" value="F:DNA-binding transcription factor activity"/>
    <property type="evidence" value="ECO:0000318"/>
    <property type="project" value="GO_Central"/>
</dbReference>
<dbReference type="GO" id="GO:0008203">
    <property type="term" value="P:cholesterol metabolic process"/>
    <property type="evidence" value="ECO:0007669"/>
    <property type="project" value="UniProtKB-UniPathway"/>
</dbReference>
<dbReference type="GO" id="GO:0019679">
    <property type="term" value="P:propionate metabolic process, methylcitrate cycle"/>
    <property type="evidence" value="ECO:0000315"/>
    <property type="project" value="UniProtKB"/>
</dbReference>
<dbReference type="GO" id="GO:0006355">
    <property type="term" value="P:regulation of DNA-templated transcription"/>
    <property type="evidence" value="ECO:0000315"/>
    <property type="project" value="UniProtKB"/>
</dbReference>
<dbReference type="GO" id="GO:0001666">
    <property type="term" value="P:response to hypoxia"/>
    <property type="evidence" value="ECO:0000314"/>
    <property type="project" value="MTBBASE"/>
</dbReference>
<dbReference type="CDD" id="cd00093">
    <property type="entry name" value="HTH_XRE"/>
    <property type="match status" value="1"/>
</dbReference>
<dbReference type="FunFam" id="1.10.260.40:FF:000025">
    <property type="entry name" value="Cro/Cl family transcriptional regulator"/>
    <property type="match status" value="1"/>
</dbReference>
<dbReference type="Gene3D" id="1.10.260.40">
    <property type="entry name" value="lambda repressor-like DNA-binding domains"/>
    <property type="match status" value="1"/>
</dbReference>
<dbReference type="InterPro" id="IPR050807">
    <property type="entry name" value="Bact_TransReg_Diox"/>
</dbReference>
<dbReference type="InterPro" id="IPR001387">
    <property type="entry name" value="Cro/C1-type_HTH"/>
</dbReference>
<dbReference type="InterPro" id="IPR026281">
    <property type="entry name" value="HTH_RamB"/>
</dbReference>
<dbReference type="InterPro" id="IPR010359">
    <property type="entry name" value="IrrE_HExxH"/>
</dbReference>
<dbReference type="InterPro" id="IPR010982">
    <property type="entry name" value="Lambda_DNA-bd_dom_sf"/>
</dbReference>
<dbReference type="InterPro" id="IPR018653">
    <property type="entry name" value="ScfR_C"/>
</dbReference>
<dbReference type="PANTHER" id="PTHR46797">
    <property type="entry name" value="HTH-TYPE TRANSCRIPTIONAL REGULATOR"/>
    <property type="match status" value="1"/>
</dbReference>
<dbReference type="PANTHER" id="PTHR46797:SF23">
    <property type="entry name" value="HTH-TYPE TRANSCRIPTIONAL REGULATOR SUTR"/>
    <property type="match status" value="1"/>
</dbReference>
<dbReference type="Pfam" id="PF01381">
    <property type="entry name" value="HTH_3"/>
    <property type="match status" value="1"/>
</dbReference>
<dbReference type="Pfam" id="PF06114">
    <property type="entry name" value="Peptidase_M78"/>
    <property type="match status" value="1"/>
</dbReference>
<dbReference type="Pfam" id="PF09856">
    <property type="entry name" value="ScfRs"/>
    <property type="match status" value="1"/>
</dbReference>
<dbReference type="PIRSF" id="PIRSF019251">
    <property type="entry name" value="Rv0465c"/>
    <property type="match status" value="1"/>
</dbReference>
<dbReference type="SMART" id="SM00530">
    <property type="entry name" value="HTH_XRE"/>
    <property type="match status" value="1"/>
</dbReference>
<dbReference type="SUPFAM" id="SSF47413">
    <property type="entry name" value="lambda repressor-like DNA-binding domains"/>
    <property type="match status" value="1"/>
</dbReference>
<dbReference type="PROSITE" id="PS50943">
    <property type="entry name" value="HTH_CROC1"/>
    <property type="match status" value="1"/>
</dbReference>